<protein>
    <recommendedName>
        <fullName evidence="6">Beta-1,4-mannosyl-glycoprotein 4-beta-N-acetylglucosaminyltransferase</fullName>
        <ecNumber evidence="7">2.4.1.144</ecNumber>
    </recommendedName>
    <alternativeName>
        <fullName>N-glycosyl-oligosaccharide-glycoprotein N-acetylglucosaminyltransferase III</fullName>
        <shortName>GNT-III</shortName>
        <shortName>GlcNAc-T III</shortName>
        <shortName>N-acetylglucosaminyltransferase III</shortName>
    </alternativeName>
</protein>
<comment type="function">
    <text evidence="1 4 5">It is involved in the regulation of the biosynthesis and biological function of glycoprotein oligosaccharides. Catalyzes the addition of N-acetylglucosamine in beta 1-4 linkage to the beta-linked mannose of the trimannosyl core of N-linked sugar chains, called bisecting N-acetylglucosamine (GlcNAc). It is one of the most important enzymes involved in the regulation of the biosynthesis of glycoprotein oligosaccharides. The addition of this bisecting GlcNAc residue alters not only the composition, but also the conformation of the N-glycan. The introduction of the bisecting GlcNAc residue results in the suppression of further processing and elongation of N-glycans, precluding the formation of beta-1,6 GlcNAc branching, catalyzed by MGAT5 since it is unable to use the bisected oligosaccharide as a substrate (PubMed:19403558). Addition of bisecting N-acetylglucosamine to CDH1/E-cadherin modulates CDH1 cell membrane location (PubMed:19403558). Inhibits NeuAc-alpha-2,3-Gal-beta-1,4-GlcNAc- formation which modulates sialylation levels and plays a role in cell migration regulation (PubMed:26801611). In brain, addition of bisecting N-acetylglucosamine to BACE1 blocks its lysosomal targeting in response to oxidative stress and further degradation which increases its location to early endosome and the APP cleavage (By similarity).</text>
</comment>
<comment type="catalytic activity">
    <reaction evidence="7">
        <text>N(4)-{beta-D-GlcNAc-(1-&gt;2)-alpha-D-Man-(1-&gt;3)-[beta-D-GlcNAc-(1-&gt;2)-alpha-D-Man-(1-&gt;6)]-beta-D-Man-(1-&gt;4)-beta-D-GlcNAc-(1-&gt;4)-beta-D-GlcNAc}-L-asparaginyl-[protein] + UDP-N-acetyl-alpha-D-glucosamine = N(4)-{beta-D-GlcNAc-(1-&gt;2)-alpha-D-Man-(1-&gt;3)-[beta-D-GlcNAc-(1-&gt;4)]-[beta-D-GlcNAc-(1-&gt;2)-alpha-D-Man-(1-&gt;6)]-beta-D-Man-(1-&gt;4)-beta-D-GlcNAc-(1-&gt;4)-beta-D-GlcNAc}-L-asparaginyl-[protein] + UDP + H(+)</text>
        <dbReference type="Rhea" id="RHEA:15509"/>
        <dbReference type="Rhea" id="RHEA-COMP:13526"/>
        <dbReference type="Rhea" id="RHEA-COMP:14371"/>
        <dbReference type="ChEBI" id="CHEBI:15378"/>
        <dbReference type="ChEBI" id="CHEBI:57705"/>
        <dbReference type="ChEBI" id="CHEBI:58223"/>
        <dbReference type="ChEBI" id="CHEBI:60651"/>
        <dbReference type="ChEBI" id="CHEBI:139504"/>
        <dbReference type="EC" id="2.4.1.144"/>
    </reaction>
</comment>
<comment type="pathway">
    <text evidence="7">Protein modification; protein glycosylation.</text>
</comment>
<comment type="subunit">
    <text evidence="1">Interacts with MGAT4D.</text>
</comment>
<comment type="interaction">
    <interactant intactId="EBI-18058216">
        <id>Q09327</id>
    </interactant>
    <interactant intactId="EBI-749370">
        <id>Q9BSL1</id>
        <label>UBAC1</label>
    </interactant>
    <organismsDiffer>false</organismsDiffer>
    <experiments>3</experiments>
</comment>
<comment type="subcellular location">
    <subcellularLocation>
        <location>Golgi apparatus membrane</location>
        <topology evidence="6">Single-pass type II membrane protein</topology>
    </subcellularLocation>
</comment>
<comment type="induction">
    <text evidence="4">Expression is up-regulated by CDH1/E-cadherin-mediated cell-cell interaction.</text>
</comment>
<comment type="similarity">
    <text evidence="6">Belongs to the glycosyltransferase 17 family.</text>
</comment>
<comment type="sequence caution" evidence="6">
    <conflict type="erroneous initiation">
        <sequence resource="EMBL-CDS" id="BAA02937"/>
    </conflict>
    <text>Truncated N-terminus.</text>
</comment>
<comment type="online information" name="Functional Glycomics Gateway - GTase">
    <link uri="http://www.functionalglycomics.org/glycomics/molecule/jsp/glycoEnzyme/viewGlycoEnzyme.jsp?gbpId=gt_hum_540"/>
    <text>Beta-1,4-mannosyl-glycoprotein 4-beta-N-acetylglucosaminyltransferase</text>
</comment>
<proteinExistence type="evidence at protein level"/>
<name>MGAT3_HUMAN</name>
<reference key="1">
    <citation type="journal article" date="1993" name="J. Biochem.">
        <title>cDNA cloning, expression, and chromosomal localization of human N-acetylglucosaminyltransferase III (GnT-III).</title>
        <authorList>
            <person name="Ihara Y."/>
            <person name="Nishikawa A."/>
            <person name="Toma T."/>
            <person name="Soejima H."/>
            <person name="Niikawa N."/>
            <person name="Taniguchi N."/>
        </authorList>
    </citation>
    <scope>NUCLEOTIDE SEQUENCE [MRNA]</scope>
</reference>
<reference key="2">
    <citation type="journal article" date="2004" name="Genome Biol.">
        <title>A genome annotation-driven approach to cloning the human ORFeome.</title>
        <authorList>
            <person name="Collins J.E."/>
            <person name="Wright C.L."/>
            <person name="Edwards C.A."/>
            <person name="Davis M.P."/>
            <person name="Grinham J.A."/>
            <person name="Cole C.G."/>
            <person name="Goward M.E."/>
            <person name="Aguado B."/>
            <person name="Mallya M."/>
            <person name="Mokrab Y."/>
            <person name="Huckle E.J."/>
            <person name="Beare D.M."/>
            <person name="Dunham I."/>
        </authorList>
    </citation>
    <scope>NUCLEOTIDE SEQUENCE [LARGE SCALE MRNA]</scope>
</reference>
<reference key="3">
    <citation type="journal article" date="1999" name="Nature">
        <title>The DNA sequence of human chromosome 22.</title>
        <authorList>
            <person name="Dunham I."/>
            <person name="Hunt A.R."/>
            <person name="Collins J.E."/>
            <person name="Bruskiewich R."/>
            <person name="Beare D.M."/>
            <person name="Clamp M."/>
            <person name="Smink L.J."/>
            <person name="Ainscough R."/>
            <person name="Almeida J.P."/>
            <person name="Babbage A.K."/>
            <person name="Bagguley C."/>
            <person name="Bailey J."/>
            <person name="Barlow K.F."/>
            <person name="Bates K.N."/>
            <person name="Beasley O.P."/>
            <person name="Bird C.P."/>
            <person name="Blakey S.E."/>
            <person name="Bridgeman A.M."/>
            <person name="Buck D."/>
            <person name="Burgess J."/>
            <person name="Burrill W.D."/>
            <person name="Burton J."/>
            <person name="Carder C."/>
            <person name="Carter N.P."/>
            <person name="Chen Y."/>
            <person name="Clark G."/>
            <person name="Clegg S.M."/>
            <person name="Cobley V.E."/>
            <person name="Cole C.G."/>
            <person name="Collier R.E."/>
            <person name="Connor R."/>
            <person name="Conroy D."/>
            <person name="Corby N.R."/>
            <person name="Coville G.J."/>
            <person name="Cox A.V."/>
            <person name="Davis J."/>
            <person name="Dawson E."/>
            <person name="Dhami P.D."/>
            <person name="Dockree C."/>
            <person name="Dodsworth S.J."/>
            <person name="Durbin R.M."/>
            <person name="Ellington A.G."/>
            <person name="Evans K.L."/>
            <person name="Fey J.M."/>
            <person name="Fleming K."/>
            <person name="French L."/>
            <person name="Garner A.A."/>
            <person name="Gilbert J.G.R."/>
            <person name="Goward M.E."/>
            <person name="Grafham D.V."/>
            <person name="Griffiths M.N.D."/>
            <person name="Hall C."/>
            <person name="Hall R.E."/>
            <person name="Hall-Tamlyn G."/>
            <person name="Heathcott R.W."/>
            <person name="Ho S."/>
            <person name="Holmes S."/>
            <person name="Hunt S.E."/>
            <person name="Jones M.C."/>
            <person name="Kershaw J."/>
            <person name="Kimberley A.M."/>
            <person name="King A."/>
            <person name="Laird G.K."/>
            <person name="Langford C.F."/>
            <person name="Leversha M.A."/>
            <person name="Lloyd C."/>
            <person name="Lloyd D.M."/>
            <person name="Martyn I.D."/>
            <person name="Mashreghi-Mohammadi M."/>
            <person name="Matthews L.H."/>
            <person name="Mccann O.T."/>
            <person name="Mcclay J."/>
            <person name="Mclaren S."/>
            <person name="McMurray A.A."/>
            <person name="Milne S.A."/>
            <person name="Mortimore B.J."/>
            <person name="Odell C.N."/>
            <person name="Pavitt R."/>
            <person name="Pearce A.V."/>
            <person name="Pearson D."/>
            <person name="Phillimore B.J.C.T."/>
            <person name="Phillips S.H."/>
            <person name="Plumb R.W."/>
            <person name="Ramsay H."/>
            <person name="Ramsey Y."/>
            <person name="Rogers L."/>
            <person name="Ross M.T."/>
            <person name="Scott C.E."/>
            <person name="Sehra H.K."/>
            <person name="Skuce C.D."/>
            <person name="Smalley S."/>
            <person name="Smith M.L."/>
            <person name="Soderlund C."/>
            <person name="Spragon L."/>
            <person name="Steward C.A."/>
            <person name="Sulston J.E."/>
            <person name="Swann R.M."/>
            <person name="Vaudin M."/>
            <person name="Wall M."/>
            <person name="Wallis J.M."/>
            <person name="Whiteley M.N."/>
            <person name="Willey D.L."/>
            <person name="Williams L."/>
            <person name="Williams S.A."/>
            <person name="Williamson H."/>
            <person name="Wilmer T.E."/>
            <person name="Wilming L."/>
            <person name="Wright C.L."/>
            <person name="Hubbard T."/>
            <person name="Bentley D.R."/>
            <person name="Beck S."/>
            <person name="Rogers J."/>
            <person name="Shimizu N."/>
            <person name="Minoshima S."/>
            <person name="Kawasaki K."/>
            <person name="Sasaki T."/>
            <person name="Asakawa S."/>
            <person name="Kudoh J."/>
            <person name="Shintani A."/>
            <person name="Shibuya K."/>
            <person name="Yoshizaki Y."/>
            <person name="Aoki N."/>
            <person name="Mitsuyama S."/>
            <person name="Roe B.A."/>
            <person name="Chen F."/>
            <person name="Chu L."/>
            <person name="Crabtree J."/>
            <person name="Deschamps S."/>
            <person name="Do A."/>
            <person name="Do T."/>
            <person name="Dorman A."/>
            <person name="Fang F."/>
            <person name="Fu Y."/>
            <person name="Hu P."/>
            <person name="Hua A."/>
            <person name="Kenton S."/>
            <person name="Lai H."/>
            <person name="Lao H.I."/>
            <person name="Lewis J."/>
            <person name="Lewis S."/>
            <person name="Lin S.-P."/>
            <person name="Loh P."/>
            <person name="Malaj E."/>
            <person name="Nguyen T."/>
            <person name="Pan H."/>
            <person name="Phan S."/>
            <person name="Qi S."/>
            <person name="Qian Y."/>
            <person name="Ray L."/>
            <person name="Ren Q."/>
            <person name="Shaull S."/>
            <person name="Sloan D."/>
            <person name="Song L."/>
            <person name="Wang Q."/>
            <person name="Wang Y."/>
            <person name="Wang Z."/>
            <person name="White J."/>
            <person name="Willingham D."/>
            <person name="Wu H."/>
            <person name="Yao Z."/>
            <person name="Zhan M."/>
            <person name="Zhang G."/>
            <person name="Chissoe S."/>
            <person name="Murray J."/>
            <person name="Miller N."/>
            <person name="Minx P."/>
            <person name="Fulton R."/>
            <person name="Johnson D."/>
            <person name="Bemis G."/>
            <person name="Bentley D."/>
            <person name="Bradshaw H."/>
            <person name="Bourne S."/>
            <person name="Cordes M."/>
            <person name="Du Z."/>
            <person name="Fulton L."/>
            <person name="Goela D."/>
            <person name="Graves T."/>
            <person name="Hawkins J."/>
            <person name="Hinds K."/>
            <person name="Kemp K."/>
            <person name="Latreille P."/>
            <person name="Layman D."/>
            <person name="Ozersky P."/>
            <person name="Rohlfing T."/>
            <person name="Scheet P."/>
            <person name="Walker C."/>
            <person name="Wamsley A."/>
            <person name="Wohldmann P."/>
            <person name="Pepin K."/>
            <person name="Nelson J."/>
            <person name="Korf I."/>
            <person name="Bedell J.A."/>
            <person name="Hillier L.W."/>
            <person name="Mardis E."/>
            <person name="Waterston R."/>
            <person name="Wilson R."/>
            <person name="Emanuel B.S."/>
            <person name="Shaikh T."/>
            <person name="Kurahashi H."/>
            <person name="Saitta S."/>
            <person name="Budarf M.L."/>
            <person name="McDermid H.E."/>
            <person name="Johnson A."/>
            <person name="Wong A.C.C."/>
            <person name="Morrow B.E."/>
            <person name="Edelmann L."/>
            <person name="Kim U.J."/>
            <person name="Shizuya H."/>
            <person name="Simon M.I."/>
            <person name="Dumanski J.P."/>
            <person name="Peyrard M."/>
            <person name="Kedra D."/>
            <person name="Seroussi E."/>
            <person name="Fransson I."/>
            <person name="Tapia I."/>
            <person name="Bruder C.E."/>
            <person name="O'Brien K.P."/>
            <person name="Wilkinson P."/>
            <person name="Bodenteich A."/>
            <person name="Hartman K."/>
            <person name="Hu X."/>
            <person name="Khan A.S."/>
            <person name="Lane L."/>
            <person name="Tilahun Y."/>
            <person name="Wright H."/>
        </authorList>
    </citation>
    <scope>NUCLEOTIDE SEQUENCE [LARGE SCALE GENOMIC DNA]</scope>
</reference>
<reference key="4">
    <citation type="journal article" date="2004" name="Genome Res.">
        <title>The status, quality, and expansion of the NIH full-length cDNA project: the Mammalian Gene Collection (MGC).</title>
        <authorList>
            <consortium name="The MGC Project Team"/>
        </authorList>
    </citation>
    <scope>NUCLEOTIDE SEQUENCE [LARGE SCALE MRNA]</scope>
    <source>
        <tissue>Cerebellum</tissue>
        <tissue>Fetal brain</tissue>
    </source>
</reference>
<reference key="5">
    <citation type="journal article" date="2009" name="Hum. Mol. Genet.">
        <title>The role of N-acetylglucosaminyltransferase III and V in the post-transcriptional modifications of E-cadherin.</title>
        <authorList>
            <person name="Pinho S.S."/>
            <person name="Reis C.A."/>
            <person name="Paredes J."/>
            <person name="Magalhaes A.M."/>
            <person name="Ferreira A.C."/>
            <person name="Figueiredo J."/>
            <person name="Xiaogang W."/>
            <person name="Carneiro F."/>
            <person name="Gaertner F."/>
            <person name="Seruca R."/>
        </authorList>
    </citation>
    <scope>FUNCTION</scope>
    <scope>INDUCTION BY E-CADHERIN</scope>
</reference>
<reference key="6">
    <citation type="journal article" date="2016" name="J. Biol. Chem.">
        <title>Expression of N-Acetylglucosaminyltransferase III Suppresses alpha2,3-Sialylation, and Its Distinctive Functions in Cell Migration Are Attributed to alpha2,6-Sialylation Levels.</title>
        <authorList>
            <person name="Lu J."/>
            <person name="Isaji T."/>
            <person name="Im S."/>
            <person name="Fukuda T."/>
            <person name="Kameyama A."/>
            <person name="Gu J."/>
        </authorList>
    </citation>
    <scope>FUNCTION</scope>
</reference>
<gene>
    <name evidence="8" type="primary">MGAT3</name>
    <name type="synonym">GGNT3</name>
</gene>
<keyword id="KW-0325">Glycoprotein</keyword>
<keyword id="KW-0328">Glycosyltransferase</keyword>
<keyword id="KW-0333">Golgi apparatus</keyword>
<keyword id="KW-0472">Membrane</keyword>
<keyword id="KW-1267">Proteomics identification</keyword>
<keyword id="KW-1185">Reference proteome</keyword>
<keyword id="KW-0735">Signal-anchor</keyword>
<keyword id="KW-0808">Transferase</keyword>
<keyword id="KW-0812">Transmembrane</keyword>
<keyword id="KW-1133">Transmembrane helix</keyword>
<organism>
    <name type="scientific">Homo sapiens</name>
    <name type="common">Human</name>
    <dbReference type="NCBI Taxonomy" id="9606"/>
    <lineage>
        <taxon>Eukaryota</taxon>
        <taxon>Metazoa</taxon>
        <taxon>Chordata</taxon>
        <taxon>Craniata</taxon>
        <taxon>Vertebrata</taxon>
        <taxon>Euteleostomi</taxon>
        <taxon>Mammalia</taxon>
        <taxon>Eutheria</taxon>
        <taxon>Euarchontoglires</taxon>
        <taxon>Primates</taxon>
        <taxon>Haplorrhini</taxon>
        <taxon>Catarrhini</taxon>
        <taxon>Hominidae</taxon>
        <taxon>Homo</taxon>
    </lineage>
</organism>
<dbReference type="EC" id="2.4.1.144" evidence="7"/>
<dbReference type="EMBL" id="D13789">
    <property type="protein sequence ID" value="BAA02937.1"/>
    <property type="status" value="ALT_INIT"/>
    <property type="molecule type" value="mRNA"/>
</dbReference>
<dbReference type="EMBL" id="CR456519">
    <property type="protein sequence ID" value="CAG30405.1"/>
    <property type="molecule type" value="mRNA"/>
</dbReference>
<dbReference type="EMBL" id="AL022312">
    <property type="status" value="NOT_ANNOTATED_CDS"/>
    <property type="molecule type" value="Genomic_DNA"/>
</dbReference>
<dbReference type="EMBL" id="BC075025">
    <property type="protein sequence ID" value="AAH75025.1"/>
    <property type="molecule type" value="mRNA"/>
</dbReference>
<dbReference type="EMBL" id="BC075026">
    <property type="protein sequence ID" value="AAH75026.1"/>
    <property type="molecule type" value="mRNA"/>
</dbReference>
<dbReference type="EMBL" id="BC113383">
    <property type="protein sequence ID" value="AAI13384.1"/>
    <property type="molecule type" value="mRNA"/>
</dbReference>
<dbReference type="EMBL" id="BC113718">
    <property type="protein sequence ID" value="AAI13719.1"/>
    <property type="molecule type" value="mRNA"/>
</dbReference>
<dbReference type="CCDS" id="CCDS13994.2"/>
<dbReference type="PIR" id="JN0586">
    <property type="entry name" value="JN0586"/>
</dbReference>
<dbReference type="RefSeq" id="NP_001091740.1">
    <property type="nucleotide sequence ID" value="NM_001098270.2"/>
</dbReference>
<dbReference type="RefSeq" id="NP_002400.3">
    <property type="nucleotide sequence ID" value="NM_002409.4"/>
</dbReference>
<dbReference type="RefSeq" id="XP_005261666.1">
    <property type="nucleotide sequence ID" value="XM_005261609.2"/>
</dbReference>
<dbReference type="RefSeq" id="XP_011528486.1">
    <property type="nucleotide sequence ID" value="XM_011530184.2"/>
</dbReference>
<dbReference type="RefSeq" id="XP_011528487.1">
    <property type="nucleotide sequence ID" value="XM_011530185.2"/>
</dbReference>
<dbReference type="RefSeq" id="XP_011528488.1">
    <property type="nucleotide sequence ID" value="XM_011530186.2"/>
</dbReference>
<dbReference type="RefSeq" id="XP_011528489.1">
    <property type="nucleotide sequence ID" value="XM_011530187.2"/>
</dbReference>
<dbReference type="RefSeq" id="XP_011528490.1">
    <property type="nucleotide sequence ID" value="XM_011530188.2"/>
</dbReference>
<dbReference type="RefSeq" id="XP_011528491.1">
    <property type="nucleotide sequence ID" value="XM_011530189.2"/>
</dbReference>
<dbReference type="RefSeq" id="XP_011528492.1">
    <property type="nucleotide sequence ID" value="XM_011530190.2"/>
</dbReference>
<dbReference type="RefSeq" id="XP_011528493.1">
    <property type="nucleotide sequence ID" value="XM_011530191.2"/>
</dbReference>
<dbReference type="RefSeq" id="XP_011528494.1">
    <property type="nucleotide sequence ID" value="XM_011530192.2"/>
</dbReference>
<dbReference type="RefSeq" id="XP_011528496.1">
    <property type="nucleotide sequence ID" value="XM_011530194.2"/>
</dbReference>
<dbReference type="RefSeq" id="XP_016884291.1">
    <property type="nucleotide sequence ID" value="XM_017028802.1"/>
</dbReference>
<dbReference type="BioGRID" id="110404">
    <property type="interactions" value="3"/>
</dbReference>
<dbReference type="FunCoup" id="Q09327">
    <property type="interactions" value="219"/>
</dbReference>
<dbReference type="IntAct" id="Q09327">
    <property type="interactions" value="1"/>
</dbReference>
<dbReference type="STRING" id="9606.ENSP00000345270"/>
<dbReference type="BindingDB" id="Q09327"/>
<dbReference type="ChEMBL" id="CHEMBL2375206"/>
<dbReference type="CAZy" id="GT17">
    <property type="family name" value="Glycosyltransferase Family 17"/>
</dbReference>
<dbReference type="GlyCosmos" id="Q09327">
    <property type="glycosylation" value="5 sites, 1 glycan"/>
</dbReference>
<dbReference type="GlyGen" id="Q09327">
    <property type="glycosylation" value="8 sites, 1 N-linked glycan (1 site), 2 O-linked glycans (4 sites)"/>
</dbReference>
<dbReference type="iPTMnet" id="Q09327"/>
<dbReference type="PhosphoSitePlus" id="Q09327"/>
<dbReference type="BioMuta" id="MGAT3"/>
<dbReference type="DMDM" id="61252497"/>
<dbReference type="jPOST" id="Q09327"/>
<dbReference type="MassIVE" id="Q09327"/>
<dbReference type="PaxDb" id="9606-ENSP00000345270"/>
<dbReference type="PeptideAtlas" id="Q09327"/>
<dbReference type="ProteomicsDB" id="58718"/>
<dbReference type="Antibodypedia" id="12672">
    <property type="antibodies" value="237 antibodies from 28 providers"/>
</dbReference>
<dbReference type="DNASU" id="4248"/>
<dbReference type="Ensembl" id="ENST00000341184.7">
    <property type="protein sequence ID" value="ENSP00000345270.6"/>
    <property type="gene ID" value="ENSG00000128268.12"/>
</dbReference>
<dbReference type="GeneID" id="4248"/>
<dbReference type="KEGG" id="hsa:4248"/>
<dbReference type="MANE-Select" id="ENST00000341184.7">
    <property type="protein sequence ID" value="ENSP00000345270.6"/>
    <property type="RefSeq nucleotide sequence ID" value="NM_002409.5"/>
    <property type="RefSeq protein sequence ID" value="NP_002400.3"/>
</dbReference>
<dbReference type="UCSC" id="uc003axv.6">
    <property type="organism name" value="human"/>
</dbReference>
<dbReference type="AGR" id="HGNC:7046"/>
<dbReference type="CTD" id="4248"/>
<dbReference type="DisGeNET" id="4248"/>
<dbReference type="GeneCards" id="MGAT3"/>
<dbReference type="HGNC" id="HGNC:7046">
    <property type="gene designation" value="MGAT3"/>
</dbReference>
<dbReference type="HPA" id="ENSG00000128268">
    <property type="expression patterns" value="Tissue enhanced (brain, intestine)"/>
</dbReference>
<dbReference type="MIM" id="604621">
    <property type="type" value="gene"/>
</dbReference>
<dbReference type="neXtProt" id="NX_Q09327"/>
<dbReference type="OpenTargets" id="ENSG00000128268"/>
<dbReference type="PharmGKB" id="PA30781"/>
<dbReference type="VEuPathDB" id="HostDB:ENSG00000128268"/>
<dbReference type="eggNOG" id="ENOG502QUBY">
    <property type="taxonomic scope" value="Eukaryota"/>
</dbReference>
<dbReference type="GeneTree" id="ENSGT00390000008221"/>
<dbReference type="HOGENOM" id="CLU_029534_0_0_1"/>
<dbReference type="InParanoid" id="Q09327"/>
<dbReference type="OMA" id="QPEIIWR"/>
<dbReference type="OrthoDB" id="6474464at2759"/>
<dbReference type="PAN-GO" id="Q09327">
    <property type="GO annotations" value="2 GO annotations based on evolutionary models"/>
</dbReference>
<dbReference type="PhylomeDB" id="Q09327"/>
<dbReference type="TreeFam" id="TF323781"/>
<dbReference type="BioCyc" id="MetaCyc:HS05168-MONOMER"/>
<dbReference type="BRENDA" id="2.4.1.144">
    <property type="organism ID" value="2681"/>
</dbReference>
<dbReference type="PathwayCommons" id="Q09327"/>
<dbReference type="Reactome" id="R-HSA-975574">
    <property type="pathway name" value="Reactions specific to the hybrid N-glycan synthesis pathway"/>
</dbReference>
<dbReference type="SignaLink" id="Q09327"/>
<dbReference type="UniPathway" id="UPA00378"/>
<dbReference type="BioGRID-ORCS" id="4248">
    <property type="hits" value="19 hits in 1156 CRISPR screens"/>
</dbReference>
<dbReference type="ChiTaRS" id="MGAT3">
    <property type="organism name" value="human"/>
</dbReference>
<dbReference type="GeneWiki" id="MGAT3"/>
<dbReference type="GenomeRNAi" id="4248"/>
<dbReference type="Pharos" id="Q09327">
    <property type="development level" value="Tchem"/>
</dbReference>
<dbReference type="PRO" id="PR:Q09327"/>
<dbReference type="Proteomes" id="UP000005640">
    <property type="component" value="Chromosome 22"/>
</dbReference>
<dbReference type="RNAct" id="Q09327">
    <property type="molecule type" value="protein"/>
</dbReference>
<dbReference type="Bgee" id="ENSG00000128268">
    <property type="expression patterns" value="Expressed in right hemisphere of cerebellum and 185 other cell types or tissues"/>
</dbReference>
<dbReference type="ExpressionAtlas" id="Q09327">
    <property type="expression patterns" value="baseline and differential"/>
</dbReference>
<dbReference type="GO" id="GO:0000139">
    <property type="term" value="C:Golgi membrane"/>
    <property type="evidence" value="ECO:0000304"/>
    <property type="project" value="Reactome"/>
</dbReference>
<dbReference type="GO" id="GO:0016020">
    <property type="term" value="C:membrane"/>
    <property type="evidence" value="ECO:0000304"/>
    <property type="project" value="ProtInc"/>
</dbReference>
<dbReference type="GO" id="GO:0003830">
    <property type="term" value="F:beta-1,4-mannosylglycoprotein 4-beta-N-acetylglucosaminyltransferase activity"/>
    <property type="evidence" value="ECO:0000315"/>
    <property type="project" value="UniProtKB"/>
</dbReference>
<dbReference type="GO" id="GO:0016757">
    <property type="term" value="F:glycosyltransferase activity"/>
    <property type="evidence" value="ECO:0000318"/>
    <property type="project" value="GO_Central"/>
</dbReference>
<dbReference type="GO" id="GO:0050435">
    <property type="term" value="P:amyloid-beta metabolic process"/>
    <property type="evidence" value="ECO:0000250"/>
    <property type="project" value="UniProtKB"/>
</dbReference>
<dbReference type="GO" id="GO:0034599">
    <property type="term" value="P:cellular response to oxidative stress"/>
    <property type="evidence" value="ECO:0000250"/>
    <property type="project" value="UniProtKB"/>
</dbReference>
<dbReference type="GO" id="GO:0050890">
    <property type="term" value="P:cognition"/>
    <property type="evidence" value="ECO:0000250"/>
    <property type="project" value="UniProtKB"/>
</dbReference>
<dbReference type="GO" id="GO:0006044">
    <property type="term" value="P:N-acetylglucosamine metabolic process"/>
    <property type="evidence" value="ECO:0000318"/>
    <property type="project" value="GO_Central"/>
</dbReference>
<dbReference type="GO" id="GO:1905166">
    <property type="term" value="P:negative regulation of lysosomal protein catabolic process"/>
    <property type="evidence" value="ECO:0000250"/>
    <property type="project" value="UniProtKB"/>
</dbReference>
<dbReference type="GO" id="GO:1902966">
    <property type="term" value="P:positive regulation of protein localization to early endosome"/>
    <property type="evidence" value="ECO:0000250"/>
    <property type="project" value="UniProtKB"/>
</dbReference>
<dbReference type="GO" id="GO:0008104">
    <property type="term" value="P:protein localization"/>
    <property type="evidence" value="ECO:0000315"/>
    <property type="project" value="UniProtKB"/>
</dbReference>
<dbReference type="GO" id="GO:0006487">
    <property type="term" value="P:protein N-linked glycosylation"/>
    <property type="evidence" value="ECO:0000250"/>
    <property type="project" value="UniProtKB"/>
</dbReference>
<dbReference type="GO" id="GO:0030334">
    <property type="term" value="P:regulation of cell migration"/>
    <property type="evidence" value="ECO:0000314"/>
    <property type="project" value="UniProtKB"/>
</dbReference>
<dbReference type="InterPro" id="IPR006813">
    <property type="entry name" value="Glyco_trans_17"/>
</dbReference>
<dbReference type="PANTHER" id="PTHR12224:SF0">
    <property type="entry name" value="BETA-1,4-MANNOSYL-GLYCOPROTEIN 4-BETA-N-ACETYLGLUCOSAMINYLTRANSFERASE"/>
    <property type="match status" value="1"/>
</dbReference>
<dbReference type="PANTHER" id="PTHR12224">
    <property type="entry name" value="BETA-1,4-MANNOSYL-GLYCOPROTEIN BETA-1,4-N-ACETYLGLUCOSAMINYL-TRANSFERASE"/>
    <property type="match status" value="1"/>
</dbReference>
<dbReference type="Pfam" id="PF04724">
    <property type="entry name" value="Glyco_transf_17"/>
    <property type="match status" value="1"/>
</dbReference>
<feature type="chain" id="PRO_0000188842" description="Beta-1,4-mannosyl-glycoprotein 4-beta-N-acetylglucosaminyltransferase">
    <location>
        <begin position="1"/>
        <end position="533"/>
    </location>
</feature>
<feature type="topological domain" description="Cytoplasmic" evidence="2">
    <location>
        <begin position="1"/>
        <end position="7"/>
    </location>
</feature>
<feature type="transmembrane region" description="Helical; Signal-anchor for type II membrane protein" evidence="2">
    <location>
        <begin position="8"/>
        <end position="23"/>
    </location>
</feature>
<feature type="topological domain" description="Lumenal" evidence="2">
    <location>
        <begin position="24"/>
        <end position="533"/>
    </location>
</feature>
<feature type="region of interest" description="Disordered" evidence="3">
    <location>
        <begin position="119"/>
        <end position="158"/>
    </location>
</feature>
<feature type="region of interest" description="Disordered" evidence="3">
    <location>
        <begin position="507"/>
        <end position="533"/>
    </location>
</feature>
<feature type="glycosylation site" description="N-linked (GlcNAc...) asparagine" evidence="2">
    <location>
        <position position="141"/>
    </location>
</feature>
<feature type="glycosylation site" description="N-linked (GlcNAc...) asparagine" evidence="2">
    <location>
        <position position="241"/>
    </location>
</feature>
<feature type="glycosylation site" description="N-linked (GlcNAc...) asparagine" evidence="2">
    <location>
        <position position="259"/>
    </location>
</feature>
<feature type="glycosylation site" description="N-linked (GlcNAc...) asparagine" evidence="2">
    <location>
        <position position="397"/>
    </location>
</feature>
<feature type="sequence conflict" description="In Ref. 1; BAA02937." evidence="6" ref="1">
    <original>K</original>
    <variation>T</variation>
    <location>
        <position position="346"/>
    </location>
</feature>
<accession>Q09327</accession>
<accession>A6NGD0</accession>
<accession>Q14CK5</accession>
<accession>Q6IC49</accession>
<accession>Q9UH32</accession>
<sequence>MKMRRYKLFLMFCMAGLCLISFLHFFKTLSYVTFPRELASLSPNLVSSFFWNNAPVTPQASPEPGGPDLLRTPLYSHSPLLQPLPPSKAAEELHRVDLVLPEDTTEYFVRTKAGGVCFKPGTKMLERPPPGRPEEKPEGANGSSARRPPRYLLSARERTGGRGARRKWVECVCLPGWHGPSCGVPTVVQYSNLPTKERLVPREVPRRVINAINVNHEFDLLDVRFHELGDVVDAFVVCESNFTAYGEPRPLKFREMLTNGTFEYIRHKVLYVFLDHFPPGGRQDGWIADDYLRTFLTQDGVSRLRNLRPDDVFIIDDADEIPARDGVLFLKLYDGWTEPFAFHMRKSLYGFFWKQPGTLEVVSGCTVDMLQAVYGLDGIRLRRRQYYTMPNFRQYENRTGHILVQWSLGSPLHFAGWHCSWCFTPEGIYFKLVSAQNGDFPRWGDYEDKRDLNYIRGLIRTGGWFDGTQQEYPPADPSEHMYAPKYLLKNYDRFHYLLDNPYQEPRSTAAGGWRHRGPEGRPPARGKLDEAEV</sequence>
<evidence type="ECO:0000250" key="1">
    <source>
        <dbReference type="UniProtKB" id="Q10470"/>
    </source>
</evidence>
<evidence type="ECO:0000255" key="2"/>
<evidence type="ECO:0000256" key="3">
    <source>
        <dbReference type="SAM" id="MobiDB-lite"/>
    </source>
</evidence>
<evidence type="ECO:0000269" key="4">
    <source>
    </source>
</evidence>
<evidence type="ECO:0000269" key="5">
    <source>
    </source>
</evidence>
<evidence type="ECO:0000305" key="6"/>
<evidence type="ECO:0000305" key="7">
    <source>
    </source>
</evidence>
<evidence type="ECO:0000312" key="8">
    <source>
        <dbReference type="HGNC" id="HGNC:7046"/>
    </source>
</evidence>